<keyword id="KW-1003">Cell membrane</keyword>
<keyword id="KW-1015">Disulfide bond</keyword>
<keyword id="KW-0297">G-protein coupled receptor</keyword>
<keyword id="KW-0325">Glycoprotein</keyword>
<keyword id="KW-0449">Lipoprotein</keyword>
<keyword id="KW-0472">Membrane</keyword>
<keyword id="KW-0564">Palmitate</keyword>
<keyword id="KW-0675">Receptor</keyword>
<keyword id="KW-1185">Reference proteome</keyword>
<keyword id="KW-0807">Transducer</keyword>
<keyword id="KW-0812">Transmembrane</keyword>
<keyword id="KW-1133">Transmembrane helix</keyword>
<evidence type="ECO:0000250" key="1"/>
<evidence type="ECO:0000255" key="2"/>
<evidence type="ECO:0000255" key="3">
    <source>
        <dbReference type="PROSITE-ProRule" id="PRU00521"/>
    </source>
</evidence>
<gene>
    <name type="primary">BRS3</name>
</gene>
<sequence length="399" mass="44342">MSQKQPQSPNQTLISITNDTESSSSVVSNDTTNKGWTGDNSPGIEALCAIYITYAVIISVGILGNAILIKVFFKTKSMQTVPNIFITSLALGDLLLLLTCVPVDATHYLAEGWLFGRIGCKVLSFIRLTSVGVSVFTLTILSADRYKAVVKPLERQPSNAILKTCAKAGCIWIMSMIFALPEAIFSNVHTLRDPNKNMTSEWCAFYPVSEKLLQEIHALLSFLVFYIIPLSIISVYYSLIARTLYKSTLNIPTEEQSHARKQVESRKRIAKTVLVLVALFALCWLPNHLLNLYHSFTHKAYEDSSAIHFIVTIFSRVLAFSNSCVNPFALYWLSKTFQKQFKAQLFCCKGELPEPPLAATPLNSLAVMGRVSGTENTHISEIGVASFIGRPMKKEENRV</sequence>
<name>BRS3_CAVPO</name>
<comment type="function">
    <text>Role in sperm cell division, maturation, or function. The relative order of ligand affinity is GRP = neuromedin-C &gt;&gt; neuromedin-B. This receptor mediates its action by association with G proteins that activate a phosphatidylinositol-calcium second messenger system.</text>
</comment>
<comment type="subunit">
    <text evidence="1">Interacts with C6orf89.</text>
</comment>
<comment type="subcellular location">
    <subcellularLocation>
        <location>Cell membrane</location>
        <topology>Multi-pass membrane protein</topology>
    </subcellularLocation>
</comment>
<comment type="tissue specificity">
    <text>Mainly in uteri of pregnant animals.</text>
</comment>
<comment type="similarity">
    <text evidence="3">Belongs to the G-protein coupled receptor 1 family.</text>
</comment>
<reference key="1">
    <citation type="journal article" date="1992" name="Eur. J. Biochem.">
        <title>Molecular cloning of a new bombesin receptor subtype expressed in uterus during pregnancy.</title>
        <authorList>
            <person name="Gorbulev V."/>
            <person name="Akhundova A."/>
            <person name="Buechner H."/>
            <person name="Fahrenholz F."/>
        </authorList>
    </citation>
    <scope>NUCLEOTIDE SEQUENCE [MRNA]</scope>
    <source>
        <tissue>Uterus</tissue>
    </source>
</reference>
<protein>
    <recommendedName>
        <fullName>Bombesin receptor subtype-3</fullName>
        <shortName>BRS-3</shortName>
    </recommendedName>
</protein>
<proteinExistence type="evidence at transcript level"/>
<accession>P35371</accession>
<dbReference type="EMBL" id="X67126">
    <property type="protein sequence ID" value="CAA47605.1"/>
    <property type="molecule type" value="mRNA"/>
</dbReference>
<dbReference type="PIR" id="S29480">
    <property type="entry name" value="S29480"/>
</dbReference>
<dbReference type="RefSeq" id="NP_001166392.1">
    <property type="nucleotide sequence ID" value="NM_001172921.1"/>
</dbReference>
<dbReference type="SMR" id="P35371"/>
<dbReference type="FunCoup" id="P35371">
    <property type="interactions" value="466"/>
</dbReference>
<dbReference type="STRING" id="10141.ENSCPOP00000012930"/>
<dbReference type="GlyCosmos" id="P35371">
    <property type="glycosylation" value="2 sites, No reported glycans"/>
</dbReference>
<dbReference type="Ensembl" id="ENSCPOT00000014498.3">
    <property type="protein sequence ID" value="ENSCPOP00000012930.2"/>
    <property type="gene ID" value="ENSCPOG00000014354.4"/>
</dbReference>
<dbReference type="GeneID" id="100135488"/>
<dbReference type="KEGG" id="cpoc:100135488"/>
<dbReference type="CTD" id="680"/>
<dbReference type="VEuPathDB" id="HostDB:ENSCPOG00000014354"/>
<dbReference type="eggNOG" id="KOG3656">
    <property type="taxonomic scope" value="Eukaryota"/>
</dbReference>
<dbReference type="GeneTree" id="ENSGT01120000271837"/>
<dbReference type="HOGENOM" id="CLU_009579_6_2_1"/>
<dbReference type="InParanoid" id="P35371"/>
<dbReference type="OMA" id="TNKGRTG"/>
<dbReference type="OrthoDB" id="10049706at2759"/>
<dbReference type="TreeFam" id="TF331292"/>
<dbReference type="Proteomes" id="UP000005447">
    <property type="component" value="Unassembled WGS sequence"/>
</dbReference>
<dbReference type="Bgee" id="ENSCPOG00000014354">
    <property type="expression patterns" value="Expressed in heart and 2 other cell types or tissues"/>
</dbReference>
<dbReference type="GO" id="GO:0005886">
    <property type="term" value="C:plasma membrane"/>
    <property type="evidence" value="ECO:0007669"/>
    <property type="project" value="UniProtKB-SubCell"/>
</dbReference>
<dbReference type="GO" id="GO:0004946">
    <property type="term" value="F:bombesin receptor activity"/>
    <property type="evidence" value="ECO:0007669"/>
    <property type="project" value="InterPro"/>
</dbReference>
<dbReference type="FunFam" id="1.20.1070.10:FF:000166">
    <property type="entry name" value="Bombesin receptor subtype-3"/>
    <property type="match status" value="1"/>
</dbReference>
<dbReference type="Gene3D" id="1.20.1070.10">
    <property type="entry name" value="Rhodopsin 7-helix transmembrane proteins"/>
    <property type="match status" value="1"/>
</dbReference>
<dbReference type="InterPro" id="IPR001560">
    <property type="entry name" value="Bombesin_rcpt_3"/>
</dbReference>
<dbReference type="InterPro" id="IPR001556">
    <property type="entry name" value="Bombsn_rcpt-like"/>
</dbReference>
<dbReference type="InterPro" id="IPR000276">
    <property type="entry name" value="GPCR_Rhodpsn"/>
</dbReference>
<dbReference type="InterPro" id="IPR017452">
    <property type="entry name" value="GPCR_Rhodpsn_7TM"/>
</dbReference>
<dbReference type="PANTHER" id="PTHR45695:SF6">
    <property type="entry name" value="BOMBESIN RECEPTOR SUBTYPE-3"/>
    <property type="match status" value="1"/>
</dbReference>
<dbReference type="PANTHER" id="PTHR45695">
    <property type="entry name" value="LEUCOKININ RECEPTOR-RELATED"/>
    <property type="match status" value="1"/>
</dbReference>
<dbReference type="Pfam" id="PF00001">
    <property type="entry name" value="7tm_1"/>
    <property type="match status" value="1"/>
</dbReference>
<dbReference type="PRINTS" id="PR00637">
    <property type="entry name" value="BOMBESIN3R"/>
</dbReference>
<dbReference type="PRINTS" id="PR00358">
    <property type="entry name" value="BOMBESINR"/>
</dbReference>
<dbReference type="PRINTS" id="PR00237">
    <property type="entry name" value="GPCRRHODOPSN"/>
</dbReference>
<dbReference type="SMART" id="SM01381">
    <property type="entry name" value="7TM_GPCR_Srsx"/>
    <property type="match status" value="1"/>
</dbReference>
<dbReference type="SUPFAM" id="SSF81321">
    <property type="entry name" value="Family A G protein-coupled receptor-like"/>
    <property type="match status" value="1"/>
</dbReference>
<dbReference type="PROSITE" id="PS00237">
    <property type="entry name" value="G_PROTEIN_RECEP_F1_1"/>
    <property type="match status" value="1"/>
</dbReference>
<dbReference type="PROSITE" id="PS50262">
    <property type="entry name" value="G_PROTEIN_RECEP_F1_2"/>
    <property type="match status" value="1"/>
</dbReference>
<organism>
    <name type="scientific">Cavia porcellus</name>
    <name type="common">Guinea pig</name>
    <dbReference type="NCBI Taxonomy" id="10141"/>
    <lineage>
        <taxon>Eukaryota</taxon>
        <taxon>Metazoa</taxon>
        <taxon>Chordata</taxon>
        <taxon>Craniata</taxon>
        <taxon>Vertebrata</taxon>
        <taxon>Euteleostomi</taxon>
        <taxon>Mammalia</taxon>
        <taxon>Eutheria</taxon>
        <taxon>Euarchontoglires</taxon>
        <taxon>Glires</taxon>
        <taxon>Rodentia</taxon>
        <taxon>Hystricomorpha</taxon>
        <taxon>Caviidae</taxon>
        <taxon>Cavia</taxon>
    </lineage>
</organism>
<feature type="chain" id="PRO_0000069195" description="Bombesin receptor subtype-3">
    <location>
        <begin position="1"/>
        <end position="399"/>
    </location>
</feature>
<feature type="topological domain" description="Extracellular" evidence="2">
    <location>
        <begin position="1"/>
        <end position="41"/>
    </location>
</feature>
<feature type="transmembrane region" description="Helical; Name=1" evidence="2">
    <location>
        <begin position="42"/>
        <end position="63"/>
    </location>
</feature>
<feature type="topological domain" description="Cytoplasmic" evidence="2">
    <location>
        <begin position="64"/>
        <end position="82"/>
    </location>
</feature>
<feature type="transmembrane region" description="Helical; Name=2" evidence="2">
    <location>
        <begin position="83"/>
        <end position="103"/>
    </location>
</feature>
<feature type="topological domain" description="Extracellular" evidence="2">
    <location>
        <begin position="104"/>
        <end position="121"/>
    </location>
</feature>
<feature type="transmembrane region" description="Helical; Name=3" evidence="2">
    <location>
        <begin position="122"/>
        <end position="143"/>
    </location>
</feature>
<feature type="topological domain" description="Cytoplasmic" evidence="2">
    <location>
        <begin position="144"/>
        <end position="163"/>
    </location>
</feature>
<feature type="transmembrane region" description="Helical; Name=4" evidence="2">
    <location>
        <begin position="164"/>
        <end position="184"/>
    </location>
</feature>
<feature type="topological domain" description="Extracellular" evidence="2">
    <location>
        <begin position="185"/>
        <end position="220"/>
    </location>
</feature>
<feature type="transmembrane region" description="Helical; Name=5" evidence="2">
    <location>
        <begin position="221"/>
        <end position="241"/>
    </location>
</feature>
<feature type="topological domain" description="Cytoplasmic" evidence="2">
    <location>
        <begin position="242"/>
        <end position="272"/>
    </location>
</feature>
<feature type="transmembrane region" description="Helical; Name=6" evidence="2">
    <location>
        <begin position="273"/>
        <end position="293"/>
    </location>
</feature>
<feature type="topological domain" description="Extracellular" evidence="2">
    <location>
        <begin position="294"/>
        <end position="313"/>
    </location>
</feature>
<feature type="transmembrane region" description="Helical; Name=7" evidence="2">
    <location>
        <begin position="314"/>
        <end position="333"/>
    </location>
</feature>
<feature type="topological domain" description="Cytoplasmic" evidence="2">
    <location>
        <begin position="334"/>
        <end position="399"/>
    </location>
</feature>
<feature type="lipid moiety-binding region" description="S-palmitoyl cysteine" evidence="1">
    <location>
        <position position="347"/>
    </location>
</feature>
<feature type="glycosylation site" description="N-linked (GlcNAc...) asparagine" evidence="2">
    <location>
        <position position="10"/>
    </location>
</feature>
<feature type="glycosylation site" description="N-linked (GlcNAc...) asparagine" evidence="2">
    <location>
        <position position="18"/>
    </location>
</feature>
<feature type="disulfide bond" evidence="3">
    <location>
        <begin position="120"/>
        <end position="203"/>
    </location>
</feature>